<dbReference type="EC" id="3.1.3.3"/>
<dbReference type="EMBL" id="Z94043">
    <property type="protein sequence ID" value="CAB08010.1"/>
    <property type="molecule type" value="Genomic_DNA"/>
</dbReference>
<dbReference type="EMBL" id="AL009126">
    <property type="protein sequence ID" value="CAB15416.1"/>
    <property type="molecule type" value="Genomic_DNA"/>
</dbReference>
<dbReference type="PIR" id="G70038">
    <property type="entry name" value="G70038"/>
</dbReference>
<dbReference type="RefSeq" id="NP_391291.1">
    <property type="nucleotide sequence ID" value="NC_000964.3"/>
</dbReference>
<dbReference type="RefSeq" id="WP_003228290.1">
    <property type="nucleotide sequence ID" value="NZ_OZ025638.1"/>
</dbReference>
<dbReference type="SMR" id="O07014"/>
<dbReference type="FunCoup" id="O07014">
    <property type="interactions" value="14"/>
</dbReference>
<dbReference type="STRING" id="224308.BSU34110"/>
<dbReference type="PaxDb" id="224308-BSU34110"/>
<dbReference type="EnsemblBacteria" id="CAB15416">
    <property type="protein sequence ID" value="CAB15416"/>
    <property type="gene ID" value="BSU_34110"/>
</dbReference>
<dbReference type="GeneID" id="936673"/>
<dbReference type="KEGG" id="bsu:BSU34110"/>
<dbReference type="PATRIC" id="fig|224308.179.peg.3698"/>
<dbReference type="eggNOG" id="COG2208">
    <property type="taxonomic scope" value="Bacteria"/>
</dbReference>
<dbReference type="InParanoid" id="O07014"/>
<dbReference type="OrthoDB" id="9763484at2"/>
<dbReference type="PhylomeDB" id="O07014"/>
<dbReference type="BioCyc" id="BSUB:BSU34110-MONOMER"/>
<dbReference type="BRENDA" id="3.1.3.3">
    <property type="organism ID" value="658"/>
</dbReference>
<dbReference type="Proteomes" id="UP000001570">
    <property type="component" value="Chromosome"/>
</dbReference>
<dbReference type="GO" id="GO:0036424">
    <property type="term" value="F:L-phosphoserine phosphatase activity"/>
    <property type="evidence" value="ECO:0007669"/>
    <property type="project" value="RHEA"/>
</dbReference>
<dbReference type="GO" id="GO:0016791">
    <property type="term" value="F:phosphatase activity"/>
    <property type="evidence" value="ECO:0000318"/>
    <property type="project" value="GO_Central"/>
</dbReference>
<dbReference type="GO" id="GO:0004721">
    <property type="term" value="F:phosphoprotein phosphatase activity"/>
    <property type="evidence" value="ECO:0007669"/>
    <property type="project" value="UniProtKB-KW"/>
</dbReference>
<dbReference type="CDD" id="cd00130">
    <property type="entry name" value="PAS"/>
    <property type="match status" value="1"/>
</dbReference>
<dbReference type="FunFam" id="3.60.40.10:FF:000151">
    <property type="entry name" value="Phosphoserine phosphatase RsbP"/>
    <property type="match status" value="1"/>
</dbReference>
<dbReference type="Gene3D" id="3.30.450.20">
    <property type="entry name" value="PAS domain"/>
    <property type="match status" value="1"/>
</dbReference>
<dbReference type="Gene3D" id="3.60.40.10">
    <property type="entry name" value="PPM-type phosphatase domain"/>
    <property type="match status" value="1"/>
</dbReference>
<dbReference type="InterPro" id="IPR052016">
    <property type="entry name" value="Bact_Sigma-Reg"/>
</dbReference>
<dbReference type="InterPro" id="IPR000014">
    <property type="entry name" value="PAS"/>
</dbReference>
<dbReference type="InterPro" id="IPR035965">
    <property type="entry name" value="PAS-like_dom_sf"/>
</dbReference>
<dbReference type="InterPro" id="IPR036457">
    <property type="entry name" value="PPM-type-like_dom_sf"/>
</dbReference>
<dbReference type="InterPro" id="IPR001932">
    <property type="entry name" value="PPM-type_phosphatase-like_dom"/>
</dbReference>
<dbReference type="NCBIfam" id="TIGR00229">
    <property type="entry name" value="sensory_box"/>
    <property type="match status" value="1"/>
</dbReference>
<dbReference type="PANTHER" id="PTHR43156:SF14">
    <property type="entry name" value="PHOSPHOSERINE PHOSPHATASE RSBP"/>
    <property type="match status" value="1"/>
</dbReference>
<dbReference type="PANTHER" id="PTHR43156">
    <property type="entry name" value="STAGE II SPORULATION PROTEIN E-RELATED"/>
    <property type="match status" value="1"/>
</dbReference>
<dbReference type="Pfam" id="PF13426">
    <property type="entry name" value="PAS_9"/>
    <property type="match status" value="1"/>
</dbReference>
<dbReference type="Pfam" id="PF07228">
    <property type="entry name" value="SpoIIE"/>
    <property type="match status" value="1"/>
</dbReference>
<dbReference type="SMART" id="SM00331">
    <property type="entry name" value="PP2C_SIG"/>
    <property type="match status" value="1"/>
</dbReference>
<dbReference type="SUPFAM" id="SSF81606">
    <property type="entry name" value="PP2C-like"/>
    <property type="match status" value="1"/>
</dbReference>
<dbReference type="SUPFAM" id="SSF55785">
    <property type="entry name" value="PYP-like sensor domain (PAS domain)"/>
    <property type="match status" value="1"/>
</dbReference>
<dbReference type="PROSITE" id="PS50112">
    <property type="entry name" value="PAS"/>
    <property type="match status" value="1"/>
</dbReference>
<dbReference type="PROSITE" id="PS51746">
    <property type="entry name" value="PPM_2"/>
    <property type="match status" value="1"/>
</dbReference>
<feature type="chain" id="PRO_0000057789" description="Phosphoserine phosphatase RsbP">
    <location>
        <begin position="1"/>
        <end position="403"/>
    </location>
</feature>
<feature type="domain" description="PAS" evidence="1">
    <location>
        <begin position="1"/>
        <end position="42"/>
    </location>
</feature>
<feature type="domain" description="PPM-type phosphatase" evidence="2">
    <location>
        <begin position="191"/>
        <end position="402"/>
    </location>
</feature>
<proteinExistence type="evidence at protein level"/>
<gene>
    <name type="primary">rsbP</name>
    <name type="synonym">yvfP</name>
    <name type="ordered locus">BSU34110</name>
</gene>
<protein>
    <recommendedName>
        <fullName>Phosphoserine phosphatase RsbP</fullName>
        <ecNumber>3.1.3.3</ecNumber>
    </recommendedName>
</protein>
<keyword id="KW-0378">Hydrolase</keyword>
<keyword id="KW-0464">Manganese</keyword>
<keyword id="KW-0904">Protein phosphatase</keyword>
<keyword id="KW-1185">Reference proteome</keyword>
<evidence type="ECO:0000255" key="1">
    <source>
        <dbReference type="PROSITE-ProRule" id="PRU00140"/>
    </source>
</evidence>
<evidence type="ECO:0000255" key="2">
    <source>
        <dbReference type="PROSITE-ProRule" id="PRU01082"/>
    </source>
</evidence>
<accession>O07014</accession>
<organism>
    <name type="scientific">Bacillus subtilis (strain 168)</name>
    <dbReference type="NCBI Taxonomy" id="224308"/>
    <lineage>
        <taxon>Bacteria</taxon>
        <taxon>Bacillati</taxon>
        <taxon>Bacillota</taxon>
        <taxon>Bacilli</taxon>
        <taxon>Bacillales</taxon>
        <taxon>Bacillaceae</taxon>
        <taxon>Bacillus</taxon>
    </lineage>
</organism>
<name>RSBP_BACSU</name>
<comment type="function">
    <text>Positive regulator of sigma-B activity. Dephosphorylates RsbV in response to energy stress.</text>
</comment>
<comment type="catalytic activity">
    <reaction>
        <text>O-phospho-L-serine + H2O = L-serine + phosphate</text>
        <dbReference type="Rhea" id="RHEA:21208"/>
        <dbReference type="ChEBI" id="CHEBI:15377"/>
        <dbReference type="ChEBI" id="CHEBI:33384"/>
        <dbReference type="ChEBI" id="CHEBI:43474"/>
        <dbReference type="ChEBI" id="CHEBI:57524"/>
        <dbReference type="EC" id="3.1.3.3"/>
    </reaction>
</comment>
<comment type="catalytic activity">
    <reaction>
        <text>O-phospho-D-serine + H2O = D-serine + phosphate</text>
        <dbReference type="Rhea" id="RHEA:24873"/>
        <dbReference type="ChEBI" id="CHEBI:15377"/>
        <dbReference type="ChEBI" id="CHEBI:35247"/>
        <dbReference type="ChEBI" id="CHEBI:43474"/>
        <dbReference type="ChEBI" id="CHEBI:58680"/>
        <dbReference type="EC" id="3.1.3.3"/>
    </reaction>
</comment>
<comment type="cofactor">
    <cofactor>
        <name>Mn(2+)</name>
        <dbReference type="ChEBI" id="CHEBI:29035"/>
    </cofactor>
</comment>
<comment type="induction">
    <text>Induced by entry into stationary phase, but not by carbon and energy starvation.</text>
</comment>
<comment type="domain">
    <text>The PAS domain may participate in sensing the overall energy level of the cell and communicate this information to the phosphatase domain.</text>
</comment>
<sequence>MDKQLNDAPCGFLALSEEGSIIAANRTLIKILDYEPEQVIGQHMNMMLTIPAQLFCQLYFFPLLKLEHHIEEIYISLKARDGEEIPVLINAIARHDSGASVFDCVLIPMRKRNEYENELLIARNEAQEALLAKQKANAELEIALETLKAKQEELLEINKQNQQFKLNTKRELELARKIQKNSLTEPIVNDQVQIDSYYNASSELSGDLYGYYQIDEHRYGIIILDVMGHGISSALITMSLHPLFQRQITQGLSPVKVMKELDRHLHSLFQNDEEARHYCTAIYLEIDIARQRIDYVNAGHPPALWQDDSGTQHLLHATSPPIGMFEDLEFQSSSLSYTEDGRLLLYTDGVMDPTASCYLFDLLKDHPDSPIADLKEKILTSLQHQKEAHHKSDDECFILVDVK</sequence>
<reference key="1">
    <citation type="submission" date="1997-04" db="EMBL/GenBank/DDBJ databases">
        <authorList>
            <person name="Denizot F."/>
        </authorList>
    </citation>
    <scope>NUCLEOTIDE SEQUENCE [GENOMIC DNA]</scope>
    <source>
        <strain>168</strain>
    </source>
</reference>
<reference key="2">
    <citation type="journal article" date="1997" name="Nature">
        <title>The complete genome sequence of the Gram-positive bacterium Bacillus subtilis.</title>
        <authorList>
            <person name="Kunst F."/>
            <person name="Ogasawara N."/>
            <person name="Moszer I."/>
            <person name="Albertini A.M."/>
            <person name="Alloni G."/>
            <person name="Azevedo V."/>
            <person name="Bertero M.G."/>
            <person name="Bessieres P."/>
            <person name="Bolotin A."/>
            <person name="Borchert S."/>
            <person name="Borriss R."/>
            <person name="Boursier L."/>
            <person name="Brans A."/>
            <person name="Braun M."/>
            <person name="Brignell S.C."/>
            <person name="Bron S."/>
            <person name="Brouillet S."/>
            <person name="Bruschi C.V."/>
            <person name="Caldwell B."/>
            <person name="Capuano V."/>
            <person name="Carter N.M."/>
            <person name="Choi S.-K."/>
            <person name="Codani J.-J."/>
            <person name="Connerton I.F."/>
            <person name="Cummings N.J."/>
            <person name="Daniel R.A."/>
            <person name="Denizot F."/>
            <person name="Devine K.M."/>
            <person name="Duesterhoeft A."/>
            <person name="Ehrlich S.D."/>
            <person name="Emmerson P.T."/>
            <person name="Entian K.-D."/>
            <person name="Errington J."/>
            <person name="Fabret C."/>
            <person name="Ferrari E."/>
            <person name="Foulger D."/>
            <person name="Fritz C."/>
            <person name="Fujita M."/>
            <person name="Fujita Y."/>
            <person name="Fuma S."/>
            <person name="Galizzi A."/>
            <person name="Galleron N."/>
            <person name="Ghim S.-Y."/>
            <person name="Glaser P."/>
            <person name="Goffeau A."/>
            <person name="Golightly E.J."/>
            <person name="Grandi G."/>
            <person name="Guiseppi G."/>
            <person name="Guy B.J."/>
            <person name="Haga K."/>
            <person name="Haiech J."/>
            <person name="Harwood C.R."/>
            <person name="Henaut A."/>
            <person name="Hilbert H."/>
            <person name="Holsappel S."/>
            <person name="Hosono S."/>
            <person name="Hullo M.-F."/>
            <person name="Itaya M."/>
            <person name="Jones L.-M."/>
            <person name="Joris B."/>
            <person name="Karamata D."/>
            <person name="Kasahara Y."/>
            <person name="Klaerr-Blanchard M."/>
            <person name="Klein C."/>
            <person name="Kobayashi Y."/>
            <person name="Koetter P."/>
            <person name="Koningstein G."/>
            <person name="Krogh S."/>
            <person name="Kumano M."/>
            <person name="Kurita K."/>
            <person name="Lapidus A."/>
            <person name="Lardinois S."/>
            <person name="Lauber J."/>
            <person name="Lazarevic V."/>
            <person name="Lee S.-M."/>
            <person name="Levine A."/>
            <person name="Liu H."/>
            <person name="Masuda S."/>
            <person name="Mauel C."/>
            <person name="Medigue C."/>
            <person name="Medina N."/>
            <person name="Mellado R.P."/>
            <person name="Mizuno M."/>
            <person name="Moestl D."/>
            <person name="Nakai S."/>
            <person name="Noback M."/>
            <person name="Noone D."/>
            <person name="O'Reilly M."/>
            <person name="Ogawa K."/>
            <person name="Ogiwara A."/>
            <person name="Oudega B."/>
            <person name="Park S.-H."/>
            <person name="Parro V."/>
            <person name="Pohl T.M."/>
            <person name="Portetelle D."/>
            <person name="Porwollik S."/>
            <person name="Prescott A.M."/>
            <person name="Presecan E."/>
            <person name="Pujic P."/>
            <person name="Purnelle B."/>
            <person name="Rapoport G."/>
            <person name="Rey M."/>
            <person name="Reynolds S."/>
            <person name="Rieger M."/>
            <person name="Rivolta C."/>
            <person name="Rocha E."/>
            <person name="Roche B."/>
            <person name="Rose M."/>
            <person name="Sadaie Y."/>
            <person name="Sato T."/>
            <person name="Scanlan E."/>
            <person name="Schleich S."/>
            <person name="Schroeter R."/>
            <person name="Scoffone F."/>
            <person name="Sekiguchi J."/>
            <person name="Sekowska A."/>
            <person name="Seror S.J."/>
            <person name="Serror P."/>
            <person name="Shin B.-S."/>
            <person name="Soldo B."/>
            <person name="Sorokin A."/>
            <person name="Tacconi E."/>
            <person name="Takagi T."/>
            <person name="Takahashi H."/>
            <person name="Takemaru K."/>
            <person name="Takeuchi M."/>
            <person name="Tamakoshi A."/>
            <person name="Tanaka T."/>
            <person name="Terpstra P."/>
            <person name="Tognoni A."/>
            <person name="Tosato V."/>
            <person name="Uchiyama S."/>
            <person name="Vandenbol M."/>
            <person name="Vannier F."/>
            <person name="Vassarotti A."/>
            <person name="Viari A."/>
            <person name="Wambutt R."/>
            <person name="Wedler E."/>
            <person name="Wedler H."/>
            <person name="Weitzenegger T."/>
            <person name="Winters P."/>
            <person name="Wipat A."/>
            <person name="Yamamoto H."/>
            <person name="Yamane K."/>
            <person name="Yasumoto K."/>
            <person name="Yata K."/>
            <person name="Yoshida K."/>
            <person name="Yoshikawa H.-F."/>
            <person name="Zumstein E."/>
            <person name="Yoshikawa H."/>
            <person name="Danchin A."/>
        </authorList>
    </citation>
    <scope>NUCLEOTIDE SEQUENCE [LARGE SCALE GENOMIC DNA]</scope>
    <source>
        <strain>168</strain>
    </source>
</reference>
<reference key="3">
    <citation type="journal article" date="2000" name="Mol. Microbiol.">
        <title>A PP2C phosphatase containing a PAS domain is required to convey signals of energy stress to the sigmaB transcription factor of Bacillus subtilis.</title>
        <authorList>
            <person name="Vijay K."/>
            <person name="Brody M.S."/>
            <person name="Fredlund E."/>
            <person name="Price C.W."/>
        </authorList>
    </citation>
    <scope>CHARACTERIZATION</scope>
    <source>
        <strain>168 / Marburg / ATCC 6051 / DSM 10 / JCM 1465 / NBRC 13719 / NCIMB 3610 / NRRL NRS-744 / VKM B-501</strain>
    </source>
</reference>